<evidence type="ECO:0000255" key="1"/>
<evidence type="ECO:0000255" key="2">
    <source>
        <dbReference type="PROSITE-ProRule" id="PRU00625"/>
    </source>
</evidence>
<evidence type="ECO:0000269" key="3">
    <source>
    </source>
</evidence>
<evidence type="ECO:0000269" key="4">
    <source>
    </source>
</evidence>
<evidence type="ECO:0000269" key="5">
    <source>
    </source>
</evidence>
<evidence type="ECO:0000303" key="6">
    <source>
    </source>
</evidence>
<evidence type="ECO:0000305" key="7"/>
<evidence type="ECO:0000312" key="8">
    <source>
        <dbReference type="EMBL" id="CAB11362.1"/>
    </source>
</evidence>
<evidence type="ECO:0000312" key="9">
    <source>
        <dbReference type="EMBL" id="CAB13382.1"/>
    </source>
</evidence>
<name>GERR_BACSU</name>
<reference key="1">
    <citation type="submission" date="1997-08" db="EMBL/GenBank/DDBJ databases">
        <title>Bacillus subtilis chromosomal region downstream nprE.</title>
        <authorList>
            <person name="Bertero M."/>
            <person name="Presecan E."/>
            <person name="Glaser P."/>
            <person name="Richou A."/>
            <person name="Danchin A."/>
        </authorList>
    </citation>
    <scope>NUCLEOTIDE SEQUENCE [GENOMIC DNA]</scope>
    <source>
        <strain>168</strain>
    </source>
</reference>
<reference key="2">
    <citation type="journal article" date="1997" name="Nature">
        <title>The complete genome sequence of the Gram-positive bacterium Bacillus subtilis.</title>
        <authorList>
            <person name="Kunst F."/>
            <person name="Ogasawara N."/>
            <person name="Moszer I."/>
            <person name="Albertini A.M."/>
            <person name="Alloni G."/>
            <person name="Azevedo V."/>
            <person name="Bertero M.G."/>
            <person name="Bessieres P."/>
            <person name="Bolotin A."/>
            <person name="Borchert S."/>
            <person name="Borriss R."/>
            <person name="Boursier L."/>
            <person name="Brans A."/>
            <person name="Braun M."/>
            <person name="Brignell S.C."/>
            <person name="Bron S."/>
            <person name="Brouillet S."/>
            <person name="Bruschi C.V."/>
            <person name="Caldwell B."/>
            <person name="Capuano V."/>
            <person name="Carter N.M."/>
            <person name="Choi S.-K."/>
            <person name="Codani J.-J."/>
            <person name="Connerton I.F."/>
            <person name="Cummings N.J."/>
            <person name="Daniel R.A."/>
            <person name="Denizot F."/>
            <person name="Devine K.M."/>
            <person name="Duesterhoeft A."/>
            <person name="Ehrlich S.D."/>
            <person name="Emmerson P.T."/>
            <person name="Entian K.-D."/>
            <person name="Errington J."/>
            <person name="Fabret C."/>
            <person name="Ferrari E."/>
            <person name="Foulger D."/>
            <person name="Fritz C."/>
            <person name="Fujita M."/>
            <person name="Fujita Y."/>
            <person name="Fuma S."/>
            <person name="Galizzi A."/>
            <person name="Galleron N."/>
            <person name="Ghim S.-Y."/>
            <person name="Glaser P."/>
            <person name="Goffeau A."/>
            <person name="Golightly E.J."/>
            <person name="Grandi G."/>
            <person name="Guiseppi G."/>
            <person name="Guy B.J."/>
            <person name="Haga K."/>
            <person name="Haiech J."/>
            <person name="Harwood C.R."/>
            <person name="Henaut A."/>
            <person name="Hilbert H."/>
            <person name="Holsappel S."/>
            <person name="Hosono S."/>
            <person name="Hullo M.-F."/>
            <person name="Itaya M."/>
            <person name="Jones L.-M."/>
            <person name="Joris B."/>
            <person name="Karamata D."/>
            <person name="Kasahara Y."/>
            <person name="Klaerr-Blanchard M."/>
            <person name="Klein C."/>
            <person name="Kobayashi Y."/>
            <person name="Koetter P."/>
            <person name="Koningstein G."/>
            <person name="Krogh S."/>
            <person name="Kumano M."/>
            <person name="Kurita K."/>
            <person name="Lapidus A."/>
            <person name="Lardinois S."/>
            <person name="Lauber J."/>
            <person name="Lazarevic V."/>
            <person name="Lee S.-M."/>
            <person name="Levine A."/>
            <person name="Liu H."/>
            <person name="Masuda S."/>
            <person name="Mauel C."/>
            <person name="Medigue C."/>
            <person name="Medina N."/>
            <person name="Mellado R.P."/>
            <person name="Mizuno M."/>
            <person name="Moestl D."/>
            <person name="Nakai S."/>
            <person name="Noback M."/>
            <person name="Noone D."/>
            <person name="O'Reilly M."/>
            <person name="Ogawa K."/>
            <person name="Ogiwara A."/>
            <person name="Oudega B."/>
            <person name="Park S.-H."/>
            <person name="Parro V."/>
            <person name="Pohl T.M."/>
            <person name="Portetelle D."/>
            <person name="Porwollik S."/>
            <person name="Prescott A.M."/>
            <person name="Presecan E."/>
            <person name="Pujic P."/>
            <person name="Purnelle B."/>
            <person name="Rapoport G."/>
            <person name="Rey M."/>
            <person name="Reynolds S."/>
            <person name="Rieger M."/>
            <person name="Rivolta C."/>
            <person name="Rocha E."/>
            <person name="Roche B."/>
            <person name="Rose M."/>
            <person name="Sadaie Y."/>
            <person name="Sato T."/>
            <person name="Scanlan E."/>
            <person name="Schleich S."/>
            <person name="Schroeter R."/>
            <person name="Scoffone F."/>
            <person name="Sekiguchi J."/>
            <person name="Sekowska A."/>
            <person name="Seror S.J."/>
            <person name="Serror P."/>
            <person name="Shin B.-S."/>
            <person name="Soldo B."/>
            <person name="Sorokin A."/>
            <person name="Tacconi E."/>
            <person name="Takagi T."/>
            <person name="Takahashi H."/>
            <person name="Takemaru K."/>
            <person name="Takeuchi M."/>
            <person name="Tamakoshi A."/>
            <person name="Tanaka T."/>
            <person name="Terpstra P."/>
            <person name="Tognoni A."/>
            <person name="Tosato V."/>
            <person name="Uchiyama S."/>
            <person name="Vandenbol M."/>
            <person name="Vannier F."/>
            <person name="Vassarotti A."/>
            <person name="Viari A."/>
            <person name="Wambutt R."/>
            <person name="Wedler E."/>
            <person name="Wedler H."/>
            <person name="Weitzenegger T."/>
            <person name="Winters P."/>
            <person name="Wipat A."/>
            <person name="Yamamoto H."/>
            <person name="Yamane K."/>
            <person name="Yasumoto K."/>
            <person name="Yata K."/>
            <person name="Yoshida K."/>
            <person name="Yoshikawa H.-F."/>
            <person name="Zumstein E."/>
            <person name="Yoshikawa H."/>
            <person name="Danchin A."/>
        </authorList>
    </citation>
    <scope>NUCLEOTIDE SEQUENCE [LARGE SCALE GENOMIC DNA]</scope>
    <source>
        <strain>168</strain>
    </source>
</reference>
<reference key="3">
    <citation type="journal article" date="2003" name="J. Mol. Biol.">
        <title>The sigmaE regulon and the identification of additional sporulation genes in Bacillus subtilis.</title>
        <authorList>
            <person name="Eichenberger P."/>
            <person name="Jensen S.T."/>
            <person name="Conlon E.M."/>
            <person name="van Ooij C."/>
            <person name="Silvaggi J."/>
            <person name="Gonzalez-Pastor J.-E."/>
            <person name="Fujita M."/>
            <person name="Ben-Yehuda S."/>
            <person name="Stragier P."/>
            <person name="Liu J.S."/>
            <person name="Losick R."/>
        </authorList>
    </citation>
    <scope>INDUCTION</scope>
</reference>
<reference key="4">
    <citation type="journal article" date="2005" name="FEMS Microbiol. Lett.">
        <title>The ylbO gene product of Bacillus subtilis is involved in the coat development and lysozyme resistance of spore.</title>
        <authorList>
            <person name="Kuwana R."/>
            <person name="Okumura T."/>
            <person name="Takamatsu H."/>
            <person name="Watabe K."/>
        </authorList>
    </citation>
    <scope>FUNCTION</scope>
    <scope>DEVELOPMENTAL STAGE</scope>
    <scope>DISRUPTION PHENOTYPE</scope>
    <source>
        <strain>168</strain>
    </source>
</reference>
<reference key="5">
    <citation type="journal article" date="2010" name="J. Bacteriol.">
        <title>Direct and indirect control of late sporulation genes by GerR of Bacillus subtilis.</title>
        <authorList>
            <person name="Cangiano G."/>
            <person name="Mazzone A."/>
            <person name="Baccigalupi L."/>
            <person name="Isticato R."/>
            <person name="Eichenberger P."/>
            <person name="De Felice M."/>
            <person name="Ricca E."/>
        </authorList>
    </citation>
    <scope>FUNCTION</scope>
    <scope>DNA-BINDING</scope>
    <scope>INDUCTION</scope>
    <scope>DISRUPTION PHENOTYPE</scope>
    <source>
        <strain>168 / PY79</strain>
    </source>
</reference>
<keyword id="KW-0010">Activator</keyword>
<keyword id="KW-0175">Coiled coil</keyword>
<keyword id="KW-0238">DNA-binding</keyword>
<keyword id="KW-1185">Reference proteome</keyword>
<keyword id="KW-0678">Repressor</keyword>
<keyword id="KW-0749">Sporulation</keyword>
<keyword id="KW-0804">Transcription</keyword>
<keyword id="KW-0805">Transcription regulation</keyword>
<proteinExistence type="evidence at protein level"/>
<gene>
    <name evidence="6" type="primary">gerR</name>
    <name evidence="8" type="synonym">ylbO</name>
    <name evidence="9" type="ordered locus">BSU15090</name>
</gene>
<protein>
    <recommendedName>
        <fullName evidence="7">Sporulation-specific transcriptional regulator GerR</fullName>
    </recommendedName>
</protein>
<sequence>MTITRQDAWTQDEDLLLAEVVLRHIREGGTQLSAFEEVGRALTRTAAACGFRWNSYVRKQYQSGIELAKKQRKELRKQIGVHSVNMPNSMKQTASASSEGKRDLSIQDVIQFLEQFKETPSAQEFQLEREKLKEQIQSLQKELEDLRSENQTLRNQLEMTEEDYKALIDIMDRARKMVVSKEDGRMKKAAQET</sequence>
<dbReference type="EMBL" id="Z98682">
    <property type="protein sequence ID" value="CAB11362.1"/>
    <property type="molecule type" value="Genomic_DNA"/>
</dbReference>
<dbReference type="EMBL" id="AL009126">
    <property type="protein sequence ID" value="CAB13382.1"/>
    <property type="molecule type" value="Genomic_DNA"/>
</dbReference>
<dbReference type="PIR" id="D69875">
    <property type="entry name" value="D69875"/>
</dbReference>
<dbReference type="RefSeq" id="NP_389392.1">
    <property type="nucleotide sequence ID" value="NC_000964.3"/>
</dbReference>
<dbReference type="RefSeq" id="WP_003232210.1">
    <property type="nucleotide sequence ID" value="NZ_OZ025638.1"/>
</dbReference>
<dbReference type="SMR" id="O34549"/>
<dbReference type="FunCoup" id="O34549">
    <property type="interactions" value="24"/>
</dbReference>
<dbReference type="IntAct" id="O34549">
    <property type="interactions" value="1"/>
</dbReference>
<dbReference type="STRING" id="224308.BSU15090"/>
<dbReference type="PaxDb" id="224308-BSU15090"/>
<dbReference type="EnsemblBacteria" id="CAB13382">
    <property type="protein sequence ID" value="CAB13382"/>
    <property type="gene ID" value="BSU_15090"/>
</dbReference>
<dbReference type="GeneID" id="935998"/>
<dbReference type="KEGG" id="bsu:BSU15090"/>
<dbReference type="PATRIC" id="fig|224308.179.peg.1645"/>
<dbReference type="eggNOG" id="ENOG50305IT">
    <property type="taxonomic scope" value="Bacteria"/>
</dbReference>
<dbReference type="InParanoid" id="O34549"/>
<dbReference type="OrthoDB" id="2845592at2"/>
<dbReference type="PhylomeDB" id="O34549"/>
<dbReference type="BioCyc" id="BSUB:BSU15090-MONOMER"/>
<dbReference type="Proteomes" id="UP000001570">
    <property type="component" value="Chromosome"/>
</dbReference>
<dbReference type="GO" id="GO:0003677">
    <property type="term" value="F:DNA binding"/>
    <property type="evidence" value="ECO:0007669"/>
    <property type="project" value="UniProtKB-KW"/>
</dbReference>
<dbReference type="InterPro" id="IPR014243">
    <property type="entry name" value="DNA_bind_RsfA"/>
</dbReference>
<dbReference type="InterPro" id="IPR009057">
    <property type="entry name" value="Homeodomain-like_sf"/>
</dbReference>
<dbReference type="InterPro" id="IPR017930">
    <property type="entry name" value="Myb_dom"/>
</dbReference>
<dbReference type="InterPro" id="IPR001005">
    <property type="entry name" value="SANT/Myb"/>
</dbReference>
<dbReference type="NCBIfam" id="TIGR02894">
    <property type="entry name" value="DNA_bind_RsfA"/>
    <property type="match status" value="1"/>
</dbReference>
<dbReference type="NCBIfam" id="NF010535">
    <property type="entry name" value="PRK13923.1-3"/>
    <property type="match status" value="1"/>
</dbReference>
<dbReference type="PANTHER" id="PTHR41302:SF2">
    <property type="entry name" value="PRESPORE SPECIFIC TRANSCRIPTIONAL ACTIVATOR RSFA"/>
    <property type="match status" value="1"/>
</dbReference>
<dbReference type="PANTHER" id="PTHR41302">
    <property type="entry name" value="PRESPORE-SPECIFIC TRANSCRIPTIONAL REGULATOR RSFA-RELATED"/>
    <property type="match status" value="1"/>
</dbReference>
<dbReference type="Pfam" id="PF13921">
    <property type="entry name" value="Myb_DNA-bind_6"/>
    <property type="match status" value="1"/>
</dbReference>
<dbReference type="SUPFAM" id="SSF46689">
    <property type="entry name" value="Homeodomain-like"/>
    <property type="match status" value="1"/>
</dbReference>
<dbReference type="PROSITE" id="PS51294">
    <property type="entry name" value="HTH_MYB"/>
    <property type="match status" value="1"/>
</dbReference>
<accession>O34549</accession>
<feature type="chain" id="PRO_0000049625" description="Sporulation-specific transcriptional regulator GerR">
    <location>
        <begin position="1"/>
        <end position="193"/>
    </location>
</feature>
<feature type="domain" description="HTH myb-type" evidence="2">
    <location>
        <begin position="1"/>
        <end position="61"/>
    </location>
</feature>
<feature type="DNA-binding region" description="H-T-H motif" evidence="2">
    <location>
        <begin position="35"/>
        <end position="57"/>
    </location>
</feature>
<feature type="coiled-coil region" evidence="1">
    <location>
        <begin position="122"/>
        <end position="177"/>
    </location>
</feature>
<comment type="function">
    <text evidence="4 5">Transcriptional factor that regulates the expression of several late sporulation genes (PubMed:15621419, PubMed:20435725). Controls genes of both sigma-E and sigma-K regulons, acting alone on some genes and in conjunction with SpoIIID or GerE on others (PubMed:20435725). Regulates, directly or indirectly, the expression of genes encoding coat proteins such as cgeA, cotB, cotC, cotG, cotU and cotY (PubMed:15621419, PubMed:20435725). Controls late sporulation genes in two ways: directly, by binding to the promoter region of genes such as cotB, cotU and spoVIF, and acting directly on their transcription, and indirectly, through the activation of SpoVIF, which stabilizes the transcriptional activator GerE and consequently induces the expression of the GerE-dependent genes, such as cotC and cotG (PubMed:20435725). Its effect is strongly positive on spoVIF, cotC, and cotG, weakly positive on cotB, and negative on cotU (PubMed:20435725).</text>
</comment>
<comment type="developmental stage">
    <text evidence="4">Expressed during sporulation.</text>
</comment>
<comment type="induction">
    <text evidence="3 5">Transcriptionally regulated by sigma-E (PubMed:12662922, PubMed:20435725). Transcription also requires the transcriptional regulator SpoIIID (PubMed:20435725).</text>
</comment>
<comment type="disruption phenotype">
    <text evidence="4 5">Disruption of the gene does not affect vegetative growth and has no apparent effect on production of heat-resistant spores (PubMed:15621419). However, the mutation leads to a considerably reduced spore resistance to lysozyme (PubMed:15621419, PubMed:20435725). The mutant shows some changes in spore coat morphology (PubMed:15621419). The development of outer and inner coat layers is not completed (PubMed:15621419). The synthesis or incorporation of several coat proteins is affected (PubMed:20435725). The mutant has a strongly reduced germination efficiency compared with the wild-type and the complemented strain when L-alanine is used to induce germination (PubMed:20435725).</text>
</comment>
<comment type="similarity">
    <text evidence="7">Belongs to the RsfA transcriptional regulator family.</text>
</comment>
<organism>
    <name type="scientific">Bacillus subtilis (strain 168)</name>
    <dbReference type="NCBI Taxonomy" id="224308"/>
    <lineage>
        <taxon>Bacteria</taxon>
        <taxon>Bacillati</taxon>
        <taxon>Bacillota</taxon>
        <taxon>Bacilli</taxon>
        <taxon>Bacillales</taxon>
        <taxon>Bacillaceae</taxon>
        <taxon>Bacillus</taxon>
    </lineage>
</organism>